<keyword id="KW-1003">Cell membrane</keyword>
<keyword id="KW-0966">Cell projection</keyword>
<keyword id="KW-1015">Disulfide bond</keyword>
<keyword id="KW-0245">EGF-like domain</keyword>
<keyword id="KW-0325">Glycoprotein</keyword>
<keyword id="KW-0336">GPI-anchor</keyword>
<keyword id="KW-0391">Immunity</keyword>
<keyword id="KW-0399">Innate immunity</keyword>
<keyword id="KW-0449">Lipoprotein</keyword>
<keyword id="KW-0472">Membrane</keyword>
<keyword id="KW-1185">Reference proteome</keyword>
<keyword id="KW-0677">Repeat</keyword>
<keyword id="KW-0964">Secreted</keyword>
<keyword id="KW-0732">Signal</keyword>
<protein>
    <recommendedName>
        <fullName>Uromodulin</fullName>
    </recommendedName>
    <alternativeName>
        <fullName>Tamm-Horsfall urinary glycoprotein</fullName>
        <shortName>THP</shortName>
    </alternativeName>
    <component>
        <recommendedName>
            <fullName>Uromodulin, secreted form</fullName>
        </recommendedName>
    </component>
</protein>
<proteinExistence type="evidence at transcript level"/>
<organism>
    <name type="scientific">Canis lupus familiaris</name>
    <name type="common">Dog</name>
    <name type="synonym">Canis familiaris</name>
    <dbReference type="NCBI Taxonomy" id="9615"/>
    <lineage>
        <taxon>Eukaryota</taxon>
        <taxon>Metazoa</taxon>
        <taxon>Chordata</taxon>
        <taxon>Craniata</taxon>
        <taxon>Vertebrata</taxon>
        <taxon>Euteleostomi</taxon>
        <taxon>Mammalia</taxon>
        <taxon>Eutheria</taxon>
        <taxon>Laurasiatheria</taxon>
        <taxon>Carnivora</taxon>
        <taxon>Caniformia</taxon>
        <taxon>Canidae</taxon>
        <taxon>Canis</taxon>
    </lineage>
</organism>
<dbReference type="EMBL" id="AF498324">
    <property type="protein sequence ID" value="AAO33163.1"/>
    <property type="molecule type" value="mRNA"/>
</dbReference>
<dbReference type="SMR" id="Q862Z3"/>
<dbReference type="FunCoup" id="Q862Z3">
    <property type="interactions" value="3"/>
</dbReference>
<dbReference type="STRING" id="9615.ENSCAFP00000040807"/>
<dbReference type="GlyCosmos" id="Q862Z3">
    <property type="glycosylation" value="10 sites, No reported glycans"/>
</dbReference>
<dbReference type="PaxDb" id="9612-ENSCAFP00000026625"/>
<dbReference type="eggNOG" id="ENOG502QT6B">
    <property type="taxonomic scope" value="Eukaryota"/>
</dbReference>
<dbReference type="InParanoid" id="Q862Z3"/>
<dbReference type="OrthoDB" id="2015116at2759"/>
<dbReference type="Proteomes" id="UP000002254">
    <property type="component" value="Unplaced"/>
</dbReference>
<dbReference type="Proteomes" id="UP000694429">
    <property type="component" value="Unplaced"/>
</dbReference>
<dbReference type="Proteomes" id="UP000694542">
    <property type="component" value="Unplaced"/>
</dbReference>
<dbReference type="Proteomes" id="UP000805418">
    <property type="component" value="Unplaced"/>
</dbReference>
<dbReference type="GO" id="GO:0016324">
    <property type="term" value="C:apical plasma membrane"/>
    <property type="evidence" value="ECO:0000250"/>
    <property type="project" value="UniProtKB"/>
</dbReference>
<dbReference type="GO" id="GO:0016323">
    <property type="term" value="C:basolateral plasma membrane"/>
    <property type="evidence" value="ECO:0000250"/>
    <property type="project" value="UniProtKB"/>
</dbReference>
<dbReference type="GO" id="GO:0009986">
    <property type="term" value="C:cell surface"/>
    <property type="evidence" value="ECO:0000318"/>
    <property type="project" value="GO_Central"/>
</dbReference>
<dbReference type="GO" id="GO:0060170">
    <property type="term" value="C:ciliary membrane"/>
    <property type="evidence" value="ECO:0007669"/>
    <property type="project" value="UniProtKB-SubCell"/>
</dbReference>
<dbReference type="GO" id="GO:0005929">
    <property type="term" value="C:cilium"/>
    <property type="evidence" value="ECO:0000250"/>
    <property type="project" value="UniProtKB"/>
</dbReference>
<dbReference type="GO" id="GO:0005615">
    <property type="term" value="C:extracellular space"/>
    <property type="evidence" value="ECO:0000318"/>
    <property type="project" value="GO_Central"/>
</dbReference>
<dbReference type="GO" id="GO:0016020">
    <property type="term" value="C:membrane"/>
    <property type="evidence" value="ECO:0000250"/>
    <property type="project" value="UniProtKB"/>
</dbReference>
<dbReference type="GO" id="GO:0098552">
    <property type="term" value="C:side of membrane"/>
    <property type="evidence" value="ECO:0007669"/>
    <property type="project" value="UniProtKB-KW"/>
</dbReference>
<dbReference type="GO" id="GO:0000922">
    <property type="term" value="C:spindle pole"/>
    <property type="evidence" value="ECO:0000250"/>
    <property type="project" value="UniProtKB"/>
</dbReference>
<dbReference type="GO" id="GO:0005509">
    <property type="term" value="F:calcium ion binding"/>
    <property type="evidence" value="ECO:0007669"/>
    <property type="project" value="InterPro"/>
</dbReference>
<dbReference type="GO" id="GO:0140367">
    <property type="term" value="P:antibacterial innate immune response"/>
    <property type="evidence" value="ECO:0000250"/>
    <property type="project" value="UniProtKB"/>
</dbReference>
<dbReference type="GO" id="GO:0050829">
    <property type="term" value="P:defense response to Gram-negative bacterium"/>
    <property type="evidence" value="ECO:0000250"/>
    <property type="project" value="UniProtKB"/>
</dbReference>
<dbReference type="GO" id="GO:1990266">
    <property type="term" value="P:neutrophil migration"/>
    <property type="evidence" value="ECO:0000318"/>
    <property type="project" value="GO_Central"/>
</dbReference>
<dbReference type="CDD" id="cd00054">
    <property type="entry name" value="EGF_CA"/>
    <property type="match status" value="2"/>
</dbReference>
<dbReference type="FunFam" id="2.60.40.4100:FF:000001">
    <property type="entry name" value="alpha-tectorin isoform X1"/>
    <property type="match status" value="1"/>
</dbReference>
<dbReference type="FunFam" id="2.10.25.10:FF:000038">
    <property type="entry name" value="Fibrillin 2"/>
    <property type="match status" value="1"/>
</dbReference>
<dbReference type="FunFam" id="2.60.40.3210:FF:000003">
    <property type="entry name" value="Glycoprotein 2"/>
    <property type="match status" value="1"/>
</dbReference>
<dbReference type="FunFam" id="2.10.25.10:FF:000644">
    <property type="entry name" value="Uromodulin"/>
    <property type="match status" value="1"/>
</dbReference>
<dbReference type="Gene3D" id="2.10.25.10">
    <property type="entry name" value="Laminin"/>
    <property type="match status" value="3"/>
</dbReference>
<dbReference type="Gene3D" id="2.60.40.4100">
    <property type="entry name" value="Zona pellucida, ZP-C domain"/>
    <property type="match status" value="1"/>
</dbReference>
<dbReference type="Gene3D" id="2.60.40.3210">
    <property type="entry name" value="Zona pellucida, ZP-N domain"/>
    <property type="match status" value="1"/>
</dbReference>
<dbReference type="InterPro" id="IPR001881">
    <property type="entry name" value="EGF-like_Ca-bd_dom"/>
</dbReference>
<dbReference type="InterPro" id="IPR000742">
    <property type="entry name" value="EGF-like_dom"/>
</dbReference>
<dbReference type="InterPro" id="IPR000152">
    <property type="entry name" value="EGF-type_Asp/Asn_hydroxyl_site"/>
</dbReference>
<dbReference type="InterPro" id="IPR018097">
    <property type="entry name" value="EGF_Ca-bd_CS"/>
</dbReference>
<dbReference type="InterPro" id="IPR024731">
    <property type="entry name" value="EGF_dom"/>
</dbReference>
<dbReference type="InterPro" id="IPR009030">
    <property type="entry name" value="Growth_fac_rcpt_cys_sf"/>
</dbReference>
<dbReference type="InterPro" id="IPR049883">
    <property type="entry name" value="NOTCH1_EGF-like"/>
</dbReference>
<dbReference type="InterPro" id="IPR055355">
    <property type="entry name" value="ZP-C"/>
</dbReference>
<dbReference type="InterPro" id="IPR042235">
    <property type="entry name" value="ZP-C_dom"/>
</dbReference>
<dbReference type="InterPro" id="IPR055356">
    <property type="entry name" value="ZP-N"/>
</dbReference>
<dbReference type="InterPro" id="IPR048290">
    <property type="entry name" value="ZP_chr"/>
</dbReference>
<dbReference type="InterPro" id="IPR001507">
    <property type="entry name" value="ZP_dom"/>
</dbReference>
<dbReference type="InterPro" id="IPR017977">
    <property type="entry name" value="ZP_dom_CS"/>
</dbReference>
<dbReference type="PANTHER" id="PTHR14002">
    <property type="entry name" value="ENDOGLIN/TGF-BETA RECEPTOR TYPE III"/>
    <property type="match status" value="1"/>
</dbReference>
<dbReference type="PANTHER" id="PTHR14002:SF40">
    <property type="entry name" value="UROMODULIN"/>
    <property type="match status" value="1"/>
</dbReference>
<dbReference type="Pfam" id="PF23283">
    <property type="entry name" value="D8C_UMOD"/>
    <property type="match status" value="1"/>
</dbReference>
<dbReference type="Pfam" id="PF12947">
    <property type="entry name" value="EGF_3"/>
    <property type="match status" value="1"/>
</dbReference>
<dbReference type="Pfam" id="PF07645">
    <property type="entry name" value="EGF_CA"/>
    <property type="match status" value="1"/>
</dbReference>
<dbReference type="Pfam" id="PF00100">
    <property type="entry name" value="Zona_pellucida"/>
    <property type="match status" value="1"/>
</dbReference>
<dbReference type="Pfam" id="PF23344">
    <property type="entry name" value="ZP-N"/>
    <property type="match status" value="1"/>
</dbReference>
<dbReference type="PRINTS" id="PR00023">
    <property type="entry name" value="ZPELLUCIDA"/>
</dbReference>
<dbReference type="SMART" id="SM00181">
    <property type="entry name" value="EGF"/>
    <property type="match status" value="3"/>
</dbReference>
<dbReference type="SMART" id="SM00179">
    <property type="entry name" value="EGF_CA"/>
    <property type="match status" value="2"/>
</dbReference>
<dbReference type="SMART" id="SM00241">
    <property type="entry name" value="ZP"/>
    <property type="match status" value="1"/>
</dbReference>
<dbReference type="SUPFAM" id="SSF57184">
    <property type="entry name" value="Growth factor receptor domain"/>
    <property type="match status" value="1"/>
</dbReference>
<dbReference type="PROSITE" id="PS00010">
    <property type="entry name" value="ASX_HYDROXYL"/>
    <property type="match status" value="2"/>
</dbReference>
<dbReference type="PROSITE" id="PS01186">
    <property type="entry name" value="EGF_2"/>
    <property type="match status" value="3"/>
</dbReference>
<dbReference type="PROSITE" id="PS50026">
    <property type="entry name" value="EGF_3"/>
    <property type="match status" value="3"/>
</dbReference>
<dbReference type="PROSITE" id="PS01187">
    <property type="entry name" value="EGF_CA"/>
    <property type="match status" value="2"/>
</dbReference>
<dbReference type="PROSITE" id="PS00682">
    <property type="entry name" value="ZP_1"/>
    <property type="match status" value="1"/>
</dbReference>
<dbReference type="PROSITE" id="PS51034">
    <property type="entry name" value="ZP_2"/>
    <property type="match status" value="1"/>
</dbReference>
<gene>
    <name type="primary">UMOD</name>
</gene>
<feature type="signal peptide" evidence="1">
    <location>
        <begin position="1"/>
        <end position="26"/>
    </location>
</feature>
<feature type="chain" id="PRO_0000041669" description="Uromodulin">
    <location>
        <begin position="27"/>
        <end position="620"/>
    </location>
</feature>
<feature type="chain" id="PRO_0000407908" description="Uromodulin, secreted form">
    <location>
        <begin position="27"/>
        <end position="588"/>
    </location>
</feature>
<feature type="propeptide" id="PRO_0000041670" description="Removed in mature form" evidence="3">
    <location>
        <begin position="621"/>
        <end position="642"/>
    </location>
</feature>
<feature type="domain" description="EGF-like 1" evidence="4">
    <location>
        <begin position="32"/>
        <end position="64"/>
    </location>
</feature>
<feature type="domain" description="EGF-like 2; calcium-binding" evidence="4">
    <location>
        <begin position="67"/>
        <end position="109"/>
    </location>
</feature>
<feature type="domain" description="EGF-like 3; calcium-binding" evidence="4">
    <location>
        <begin position="110"/>
        <end position="151"/>
    </location>
</feature>
<feature type="domain" description="EGF-like 4" evidence="1">
    <location>
        <begin position="294"/>
        <end position="325"/>
    </location>
</feature>
<feature type="domain" description="ZP" evidence="5">
    <location>
        <begin position="335"/>
        <end position="590"/>
    </location>
</feature>
<feature type="region of interest" description="Beta hairpin" evidence="1">
    <location>
        <begin position="152"/>
        <end position="173"/>
    </location>
</feature>
<feature type="region of interest" description="D10C" evidence="1">
    <location>
        <begin position="174"/>
        <end position="293"/>
    </location>
</feature>
<feature type="region of interest" description="ZP-N" evidence="1">
    <location>
        <begin position="335"/>
        <end position="430"/>
    </location>
</feature>
<feature type="region of interest" description="Flexible ZP-N/ZP-C linker; important for secretion and polymerization into filaments" evidence="1">
    <location>
        <begin position="431"/>
        <end position="454"/>
    </location>
</feature>
<feature type="region of interest" description="ZP-C" evidence="1">
    <location>
        <begin position="455"/>
        <end position="590"/>
    </location>
</feature>
<feature type="region of interest" description="Internal hydrophobic patch (IHP)" evidence="1">
    <location>
        <begin position="455"/>
        <end position="465"/>
    </location>
</feature>
<feature type="region of interest" description="Essential for cleavage by HPN" evidence="1">
    <location>
        <begin position="587"/>
        <end position="590"/>
    </location>
</feature>
<feature type="region of interest" description="External hydrophobic patch (EHP); regulates polymerization into filaments" evidence="1">
    <location>
        <begin position="599"/>
        <end position="607"/>
    </location>
</feature>
<feature type="site" description="Cleavage" evidence="1">
    <location>
        <begin position="588"/>
        <end position="589"/>
    </location>
</feature>
<feature type="lipid moiety-binding region" description="GPI-anchor amidated serine" evidence="3">
    <location>
        <position position="620"/>
    </location>
</feature>
<feature type="glycosylation site" description="N-linked (GlcNAc...) asparagine" evidence="3">
    <location>
        <position position="40"/>
    </location>
</feature>
<feature type="glycosylation site" description="N-linked (GlcNAc...) asparagine" evidence="3">
    <location>
        <position position="78"/>
    </location>
</feature>
<feature type="glycosylation site" description="N-linked (GlcNAc...) asparagine" evidence="3">
    <location>
        <position position="134"/>
    </location>
</feature>
<feature type="glycosylation site" description="N-linked (GlcNAc...) asparagine" evidence="3">
    <location>
        <position position="234"/>
    </location>
</feature>
<feature type="glycosylation site" description="N-linked (GlcNAc...) asparagine" evidence="3">
    <location>
        <position position="246"/>
    </location>
</feature>
<feature type="glycosylation site" description="N-linked (GlcNAc...) asparagine" evidence="3">
    <location>
        <position position="277"/>
    </location>
</feature>
<feature type="glycosylation site" description="N-linked (GlcNAc...) asparagine" evidence="3">
    <location>
        <position position="324"/>
    </location>
</feature>
<feature type="glycosylation site" description="N-linked (GlcNAc...) asparagine" evidence="3">
    <location>
        <position position="397"/>
    </location>
</feature>
<feature type="glycosylation site" description="N-linked (GlcNAc...) asparagine" evidence="3">
    <location>
        <position position="448"/>
    </location>
</feature>
<feature type="glycosylation site" description="N-linked (GlcNAc...) asparagine" evidence="3">
    <location>
        <position position="514"/>
    </location>
</feature>
<feature type="disulfide bond" evidence="4">
    <location>
        <begin position="34"/>
        <end position="43"/>
    </location>
</feature>
<feature type="disulfide bond" evidence="4">
    <location>
        <begin position="37"/>
        <end position="52"/>
    </location>
</feature>
<feature type="disulfide bond" evidence="4">
    <location>
        <begin position="54"/>
        <end position="65"/>
    </location>
</feature>
<feature type="disulfide bond" evidence="4">
    <location>
        <begin position="71"/>
        <end position="85"/>
    </location>
</feature>
<feature type="disulfide bond" evidence="4">
    <location>
        <begin position="79"/>
        <end position="94"/>
    </location>
</feature>
<feature type="disulfide bond" evidence="4">
    <location>
        <begin position="96"/>
        <end position="108"/>
    </location>
</feature>
<feature type="disulfide bond" evidence="4">
    <location>
        <begin position="114"/>
        <end position="128"/>
    </location>
</feature>
<feature type="disulfide bond" evidence="4">
    <location>
        <begin position="122"/>
        <end position="137"/>
    </location>
</feature>
<feature type="disulfide bond" evidence="4">
    <location>
        <begin position="139"/>
        <end position="150"/>
    </location>
</feature>
<feature type="disulfide bond" evidence="1">
    <location>
        <begin position="152"/>
        <end position="163"/>
    </location>
</feature>
<feature type="disulfide bond" evidence="1">
    <location>
        <begin position="157"/>
        <end position="172"/>
    </location>
</feature>
<feature type="disulfide bond" evidence="1">
    <location>
        <begin position="176"/>
        <end position="269"/>
    </location>
</feature>
<feature type="disulfide bond" evidence="1">
    <location>
        <begin position="197"/>
        <end position="284"/>
    </location>
</feature>
<feature type="disulfide bond" evidence="1">
    <location>
        <begin position="219"/>
        <end position="257"/>
    </location>
</feature>
<feature type="disulfide bond" evidence="1">
    <location>
        <begin position="225"/>
        <end position="289"/>
    </location>
</feature>
<feature type="disulfide bond" evidence="1">
    <location>
        <begin position="250"/>
        <end position="258"/>
    </location>
</feature>
<feature type="disulfide bond" evidence="1">
    <location>
        <begin position="299"/>
        <end position="308"/>
    </location>
</feature>
<feature type="disulfide bond" evidence="1">
    <location>
        <begin position="302"/>
        <end position="317"/>
    </location>
</feature>
<feature type="disulfide bond" evidence="1">
    <location>
        <begin position="319"/>
        <end position="348"/>
    </location>
</feature>
<feature type="disulfide bond" evidence="1">
    <location>
        <begin position="336"/>
        <end position="426"/>
    </location>
</feature>
<feature type="disulfide bond" evidence="1">
    <location>
        <begin position="367"/>
        <end position="390"/>
    </location>
</feature>
<feature type="disulfide bond" evidence="4">
    <location>
        <begin position="507"/>
        <end position="567"/>
    </location>
</feature>
<feature type="disulfide bond" evidence="1">
    <location>
        <begin position="528"/>
        <end position="583"/>
    </location>
</feature>
<feature type="disulfide bond" evidence="1">
    <location>
        <begin position="572"/>
        <end position="579"/>
    </location>
</feature>
<evidence type="ECO:0000250" key="1">
    <source>
        <dbReference type="UniProtKB" id="P07911"/>
    </source>
</evidence>
<evidence type="ECO:0000250" key="2">
    <source>
        <dbReference type="UniProtKB" id="Q91X17"/>
    </source>
</evidence>
<evidence type="ECO:0000255" key="3"/>
<evidence type="ECO:0000255" key="4">
    <source>
        <dbReference type="PROSITE-ProRule" id="PRU00076"/>
    </source>
</evidence>
<evidence type="ECO:0000255" key="5">
    <source>
        <dbReference type="PROSITE-ProRule" id="PRU00375"/>
    </source>
</evidence>
<evidence type="ECO:0000269" key="6">
    <source>
    </source>
</evidence>
<accession>Q862Z3</accession>
<sequence length="642" mass="70178">MGQLSSLTSVWMVVVVTSWVIIAANIDTVEARSCSECHSNATCMEDGMVTTCSCLVGFTGSGFECVDLDECAIPGAHNCSEGSSCMNTLGSYLCTCPDGFRLTPGLGCIDVDECSEPGLSRCHALATCINNKGNYSCVCPAGYRGDGQHCECSPGSCGPGLDCVPVGDALVCADPCQEHRILDEYWRSTEYGAGYTCDVGLNGWYRFTGPGGVRLAETCVPVLHCNTAAPMWLNGTHPTRDQGIVNRTACAHWRGHCCLWDASIQVKACAGGYYVYNLTETPECYLAYCTDPTSVLGTCEECSVEEDCKSHDGMWSCQCKQDFNVTDLFLLDRLECRPNDIKVSLSKCQLKSLGFEKVFMYLRDSQCSGFNERGDRDWVSVVTPARDGPCGTVMVRNETHATYSNTLYLADEIVIRDRNIKINFECSYPLDMKVSLETSLQPIVSSLNISVGGTGMFTVRMALFQTPDYTQPYQGSSVTLTTEAFLYVGTMLDGGDLSRFALLMTNCYATPSSNATDPLKYFIIQDRCPRTTDSTIQVVENGESPQGRFSVQMFRFAGNYDLVYLHCEVYLCDIINEKCKPTCSGTRFRSGGIIDQSRVLNLGPITRKNVQAVVSRAASSSLGFLKVCLPLLLSATLTLMFQ</sequence>
<name>UROM_CANLF</name>
<reference key="1">
    <citation type="journal article" date="2003" name="DNA Seq.">
        <title>Sequencing and radiation hybrid mapping of canine uromodulin.</title>
        <authorList>
            <person name="Cox M.L."/>
            <person name="Quignon P."/>
            <person name="Galibert F."/>
            <person name="Lees G.E."/>
            <person name="Murphy K.E."/>
        </authorList>
    </citation>
    <scope>NUCLEOTIDE SEQUENCE [MRNA]</scope>
</reference>
<reference key="2">
    <citation type="journal article" date="1992" name="Proc. Natl. Acad. Sci. U.S.A.">
        <title>GP-2/THP gene family encodes self-binding glycosylphosphatidylinositol-anchored proteins in apical secretory compartments of pancreas and kidney.</title>
        <authorList>
            <person name="Fukuoka S."/>
            <person name="Freedman S.D."/>
            <person name="Yu H."/>
            <person name="Sukhatme V.P."/>
            <person name="Scheele G.A."/>
        </authorList>
    </citation>
    <scope>TISSUE SPECIFICITY</scope>
</reference>
<comment type="function">
    <molecule>Uromodulin</molecule>
    <text evidence="1">Functions in biogenesis and organization of the apical membrane of epithelial cells of the thick ascending limb of Henle's loop (TALH), where it promotes formation of complex filamentous gel-like structure that may play a role in the water barrier permeability. May serve as a receptor for binding and endocytosis of cytokines (IL-1, IL-2) and TNF. Facilitates neutrophil migration across renal epithelia.</text>
</comment>
<comment type="function">
    <molecule>Uromodulin, secreted form</molecule>
    <text evidence="2">In the urine, may contribute to colloid osmotic pressure, retards passage of positively charged electrolytes, and inhibits formation of liquid containing supersaturated salts and subsequent formation of salt crystals. Protects against urinary tract infections by binding to type 1 fimbriated E.coli. Binds to bacterial adhesin fimH which mediates the stable formation of bacterial aggregates, prevents the binding of E.coli to uroplakins UPK1A and UPK1B which act as urothelial receptors for type I fimbriae, and allows for pathogen clearance through micturation. Also promotes aggregation of other bacteria including K.pneumoniae, P.aeruginosa and S.mitis and so may also protect against other uropathogens.</text>
</comment>
<comment type="subunit">
    <molecule>Uromodulin, secreted form</molecule>
    <text evidence="1">Homodimer that then polymerizes into long filaments. The filaments can additionally assemble laterally to form a sheet. The filaments consist of a zigzag-shaped backbone with laterally protruding arms which interact with bacterial adhesin fimH. Two fimH molecules can bind to a single UMOD monomer.</text>
</comment>
<comment type="subcellular location">
    <subcellularLocation>
        <location evidence="1">Apical cell membrane</location>
        <topology evidence="1">Lipid-anchor</topology>
        <topology evidence="1">GPI-anchor</topology>
    </subcellularLocation>
    <subcellularLocation>
        <location evidence="1">Basolateral cell membrane</location>
        <topology evidence="1">Lipid-anchor</topology>
        <topology evidence="1">GPI-anchor</topology>
    </subcellularLocation>
    <subcellularLocation>
        <location evidence="1">Cell projection</location>
        <location evidence="1">Cilium membrane</location>
    </subcellularLocation>
    <text evidence="1">Only a small fraction sorts to the basolateral pole of tubular epithelial cells compared to apical localization. Secreted into urine after cleavage. Colocalizes with NPHP1 and KIF3A.</text>
</comment>
<comment type="subcellular location">
    <molecule>Uromodulin, secreted form</molecule>
    <subcellularLocation>
        <location evidence="1">Secreted</location>
    </subcellularLocation>
    <text evidence="1">Detected in urine.</text>
</comment>
<comment type="tissue specificity">
    <text evidence="6">Detected in kidney and pancreas.</text>
</comment>
<comment type="domain">
    <text evidence="1">The ZP domain mediates polymerization, leading to the formation of long filaments. The core of the filament consists of interlocked ZP domains which assemble into a helical structure. Each ZP domain consists of an N-terminal (ZP-N) and C-terminal (ZP-C) region connected by a flexible linker; the linker allows the ZP domain to wrap around the ZP-C subdomain of the preceding subunit. The heavily glycosylated N-terminal part of the protein (containing several EGF-like domains) forms branches which protrude from the core and are involved in pathogen capture.</text>
</comment>
<comment type="PTM">
    <text evidence="1">N-glycosylated.</text>
</comment>
<comment type="PTM">
    <text evidence="1">Proteolytically cleaved at a conserved C-terminal proteolytic cleavage site to generate the secreted form found in urine. This cleavage is catalyzed by HPN.</text>
</comment>